<proteinExistence type="inferred from homology"/>
<evidence type="ECO:0000255" key="1">
    <source>
        <dbReference type="HAMAP-Rule" id="MF_00549"/>
    </source>
</evidence>
<accession>B7J1T7</accession>
<reference key="1">
    <citation type="journal article" date="2011" name="J. Bacteriol.">
        <title>Whole-genome sequences of thirteen isolates of Borrelia burgdorferi.</title>
        <authorList>
            <person name="Schutzer S.E."/>
            <person name="Fraser-Liggett C.M."/>
            <person name="Casjens S.R."/>
            <person name="Qiu W.G."/>
            <person name="Dunn J.J."/>
            <person name="Mongodin E.F."/>
            <person name="Luft B.J."/>
        </authorList>
    </citation>
    <scope>NUCLEOTIDE SEQUENCE [LARGE SCALE GENOMIC DNA]</scope>
    <source>
        <strain>ZS7</strain>
    </source>
</reference>
<sequence>MEKKIALIAHDKKKEDLVNFVKQNYLFLSKFKLIATGTTGSKIQQATDLTIFKYKSGPMGGDQQIGAEVAEGNILAIFFFRDPLTSQPHEPDVSALIRLCDVHKIPLATNVKTAEILIKGLESLIF</sequence>
<keyword id="KW-0456">Lyase</keyword>
<comment type="function">
    <text evidence="1">Catalyzes the formation of methylglyoxal from dihydroxyacetone phosphate.</text>
</comment>
<comment type="catalytic activity">
    <reaction evidence="1">
        <text>dihydroxyacetone phosphate = methylglyoxal + phosphate</text>
        <dbReference type="Rhea" id="RHEA:17937"/>
        <dbReference type="ChEBI" id="CHEBI:17158"/>
        <dbReference type="ChEBI" id="CHEBI:43474"/>
        <dbReference type="ChEBI" id="CHEBI:57642"/>
        <dbReference type="EC" id="4.2.3.3"/>
    </reaction>
</comment>
<comment type="similarity">
    <text evidence="1">Belongs to the methylglyoxal synthase family.</text>
</comment>
<gene>
    <name evidence="1" type="primary">mgsA</name>
    <name type="ordered locus">BbuZS7_0366</name>
</gene>
<feature type="chain" id="PRO_1000128978" description="Methylglyoxal synthase">
    <location>
        <begin position="1"/>
        <end position="126"/>
    </location>
</feature>
<feature type="domain" description="MGS-like" evidence="1">
    <location>
        <begin position="1"/>
        <end position="126"/>
    </location>
</feature>
<feature type="active site" description="Proton donor/acceptor" evidence="1">
    <location>
        <position position="62"/>
    </location>
</feature>
<feature type="binding site" evidence="1">
    <location>
        <position position="10"/>
    </location>
    <ligand>
        <name>substrate</name>
    </ligand>
</feature>
<feature type="binding site" evidence="1">
    <location>
        <position position="14"/>
    </location>
    <ligand>
        <name>substrate</name>
    </ligand>
</feature>
<feature type="binding site" evidence="1">
    <location>
        <begin position="36"/>
        <end position="39"/>
    </location>
    <ligand>
        <name>substrate</name>
    </ligand>
</feature>
<feature type="binding site" evidence="1">
    <location>
        <begin position="56"/>
        <end position="57"/>
    </location>
    <ligand>
        <name>substrate</name>
    </ligand>
</feature>
<feature type="binding site" evidence="1">
    <location>
        <position position="89"/>
    </location>
    <ligand>
        <name>substrate</name>
    </ligand>
</feature>
<protein>
    <recommendedName>
        <fullName evidence="1">Methylglyoxal synthase</fullName>
        <shortName evidence="1">MGS</shortName>
        <ecNumber evidence="1">4.2.3.3</ecNumber>
    </recommendedName>
</protein>
<name>MGSA_BORBZ</name>
<organism>
    <name type="scientific">Borreliella burgdorferi (strain ZS7)</name>
    <name type="common">Borrelia burgdorferi</name>
    <dbReference type="NCBI Taxonomy" id="445985"/>
    <lineage>
        <taxon>Bacteria</taxon>
        <taxon>Pseudomonadati</taxon>
        <taxon>Spirochaetota</taxon>
        <taxon>Spirochaetia</taxon>
        <taxon>Spirochaetales</taxon>
        <taxon>Borreliaceae</taxon>
        <taxon>Borreliella</taxon>
    </lineage>
</organism>
<dbReference type="EC" id="4.2.3.3" evidence="1"/>
<dbReference type="EMBL" id="CP001205">
    <property type="protein sequence ID" value="ACK74738.1"/>
    <property type="molecule type" value="Genomic_DNA"/>
</dbReference>
<dbReference type="RefSeq" id="WP_002657078.1">
    <property type="nucleotide sequence ID" value="NC_011728.1"/>
</dbReference>
<dbReference type="SMR" id="B7J1T7"/>
<dbReference type="GeneID" id="56567792"/>
<dbReference type="KEGG" id="bbz:BbuZS7_0366"/>
<dbReference type="HOGENOM" id="CLU_120420_1_0_12"/>
<dbReference type="Proteomes" id="UP000006901">
    <property type="component" value="Chromosome"/>
</dbReference>
<dbReference type="GO" id="GO:0005829">
    <property type="term" value="C:cytosol"/>
    <property type="evidence" value="ECO:0007669"/>
    <property type="project" value="TreeGrafter"/>
</dbReference>
<dbReference type="GO" id="GO:0008929">
    <property type="term" value="F:methylglyoxal synthase activity"/>
    <property type="evidence" value="ECO:0007669"/>
    <property type="project" value="UniProtKB-UniRule"/>
</dbReference>
<dbReference type="GO" id="GO:0019242">
    <property type="term" value="P:methylglyoxal biosynthetic process"/>
    <property type="evidence" value="ECO:0007669"/>
    <property type="project" value="UniProtKB-UniRule"/>
</dbReference>
<dbReference type="CDD" id="cd01422">
    <property type="entry name" value="MGS"/>
    <property type="match status" value="1"/>
</dbReference>
<dbReference type="Gene3D" id="3.40.50.1380">
    <property type="entry name" value="Methylglyoxal synthase-like domain"/>
    <property type="match status" value="1"/>
</dbReference>
<dbReference type="HAMAP" id="MF_00549">
    <property type="entry name" value="Methylglyoxal_synth"/>
    <property type="match status" value="1"/>
</dbReference>
<dbReference type="InterPro" id="IPR004363">
    <property type="entry name" value="Methylgl_synth"/>
</dbReference>
<dbReference type="InterPro" id="IPR018148">
    <property type="entry name" value="Methylglyoxal_synth_AS"/>
</dbReference>
<dbReference type="InterPro" id="IPR011607">
    <property type="entry name" value="MGS-like_dom"/>
</dbReference>
<dbReference type="InterPro" id="IPR036914">
    <property type="entry name" value="MGS-like_dom_sf"/>
</dbReference>
<dbReference type="NCBIfam" id="TIGR00160">
    <property type="entry name" value="MGSA"/>
    <property type="match status" value="1"/>
</dbReference>
<dbReference type="NCBIfam" id="NF003559">
    <property type="entry name" value="PRK05234.1"/>
    <property type="match status" value="1"/>
</dbReference>
<dbReference type="PANTHER" id="PTHR30492">
    <property type="entry name" value="METHYLGLYOXAL SYNTHASE"/>
    <property type="match status" value="1"/>
</dbReference>
<dbReference type="PANTHER" id="PTHR30492:SF0">
    <property type="entry name" value="METHYLGLYOXAL SYNTHASE"/>
    <property type="match status" value="1"/>
</dbReference>
<dbReference type="Pfam" id="PF02142">
    <property type="entry name" value="MGS"/>
    <property type="match status" value="1"/>
</dbReference>
<dbReference type="PIRSF" id="PIRSF006614">
    <property type="entry name" value="Methylglyox_syn"/>
    <property type="match status" value="1"/>
</dbReference>
<dbReference type="SMART" id="SM00851">
    <property type="entry name" value="MGS"/>
    <property type="match status" value="1"/>
</dbReference>
<dbReference type="SUPFAM" id="SSF52335">
    <property type="entry name" value="Methylglyoxal synthase-like"/>
    <property type="match status" value="1"/>
</dbReference>
<dbReference type="PROSITE" id="PS01335">
    <property type="entry name" value="METHYLGLYOXAL_SYNTH"/>
    <property type="match status" value="1"/>
</dbReference>
<dbReference type="PROSITE" id="PS51855">
    <property type="entry name" value="MGS"/>
    <property type="match status" value="1"/>
</dbReference>